<organism>
    <name type="scientific">Chlamydia muridarum (strain MoPn / Nigg)</name>
    <dbReference type="NCBI Taxonomy" id="243161"/>
    <lineage>
        <taxon>Bacteria</taxon>
        <taxon>Pseudomonadati</taxon>
        <taxon>Chlamydiota</taxon>
        <taxon>Chlamydiia</taxon>
        <taxon>Chlamydiales</taxon>
        <taxon>Chlamydiaceae</taxon>
        <taxon>Chlamydia/Chlamydophila group</taxon>
        <taxon>Chlamydia</taxon>
    </lineage>
</organism>
<sequence length="185" mass="20665">MELVVQSRETDKKSVIKKIRQQGGIPAVLYSGGKSLANVVIDARVFNKFLSTLESGALASTVFTLSYEGREIKALVKDIQYHVTTYDVIHLDFEELVEDREVRLNIPIRCINTVDCVGVKLGGSLRQVIRYMRVVCKPKDIVPFLELDVQSLGLSQTLKLSDIRIPEGIKPVTPLKEVAVTVARR</sequence>
<reference key="1">
    <citation type="journal article" date="2000" name="Nucleic Acids Res.">
        <title>Genome sequences of Chlamydia trachomatis MoPn and Chlamydia pneumoniae AR39.</title>
        <authorList>
            <person name="Read T.D."/>
            <person name="Brunham R.C."/>
            <person name="Shen C."/>
            <person name="Gill S.R."/>
            <person name="Heidelberg J.F."/>
            <person name="White O."/>
            <person name="Hickey E.K."/>
            <person name="Peterson J.D."/>
            <person name="Utterback T.R."/>
            <person name="Berry K.J."/>
            <person name="Bass S."/>
            <person name="Linher K.D."/>
            <person name="Weidman J.F."/>
            <person name="Khouri H.M."/>
            <person name="Craven B."/>
            <person name="Bowman C."/>
            <person name="Dodson R.J."/>
            <person name="Gwinn M.L."/>
            <person name="Nelson W.C."/>
            <person name="DeBoy R.T."/>
            <person name="Kolonay J.F."/>
            <person name="McClarty G."/>
            <person name="Salzberg S.L."/>
            <person name="Eisen J.A."/>
            <person name="Fraser C.M."/>
        </authorList>
    </citation>
    <scope>NUCLEOTIDE SEQUENCE [LARGE SCALE GENOMIC DNA]</scope>
    <source>
        <strain>MoPn / Nigg</strain>
    </source>
</reference>
<keyword id="KW-0687">Ribonucleoprotein</keyword>
<keyword id="KW-0689">Ribosomal protein</keyword>
<keyword id="KW-0694">RNA-binding</keyword>
<keyword id="KW-0699">rRNA-binding</keyword>
<comment type="function">
    <text evidence="1">This is one of the proteins that binds to the 5S RNA in the ribosome where it forms part of the central protuberance.</text>
</comment>
<comment type="subunit">
    <text evidence="1">Part of the 50S ribosomal subunit; part of the 5S rRNA/L5/L18/L25 subcomplex. Contacts the 5S rRNA. Binds to the 5S rRNA independently of L5 and L18.</text>
</comment>
<comment type="similarity">
    <text evidence="1">Belongs to the bacterial ribosomal protein bL25 family. CTC subfamily.</text>
</comment>
<protein>
    <recommendedName>
        <fullName evidence="1">Large ribosomal subunit protein bL25</fullName>
    </recommendedName>
    <alternativeName>
        <fullName evidence="2">50S ribosomal protein L25</fullName>
    </alternativeName>
    <alternativeName>
        <fullName evidence="1">General stress protein CTC</fullName>
    </alternativeName>
</protein>
<feature type="chain" id="PRO_0000181533" description="Large ribosomal subunit protein bL25">
    <location>
        <begin position="1"/>
        <end position="185"/>
    </location>
</feature>
<proteinExistence type="inferred from homology"/>
<accession>Q9PLC2</accession>
<evidence type="ECO:0000255" key="1">
    <source>
        <dbReference type="HAMAP-Rule" id="MF_01334"/>
    </source>
</evidence>
<evidence type="ECO:0000305" key="2"/>
<name>RL25_CHLMU</name>
<gene>
    <name evidence="1" type="primary">rplY</name>
    <name evidence="1" type="synonym">ctc</name>
    <name type="ordered locus">TC_0182</name>
</gene>
<dbReference type="EMBL" id="AE002160">
    <property type="protein sequence ID" value="AAF39056.1"/>
    <property type="molecule type" value="Genomic_DNA"/>
</dbReference>
<dbReference type="PIR" id="B81732">
    <property type="entry name" value="B81732"/>
</dbReference>
<dbReference type="RefSeq" id="WP_010229737.1">
    <property type="nucleotide sequence ID" value="NZ_CP063055.1"/>
</dbReference>
<dbReference type="SMR" id="Q9PLC2"/>
<dbReference type="GeneID" id="1246308"/>
<dbReference type="KEGG" id="cmu:TC_0182"/>
<dbReference type="eggNOG" id="COG1825">
    <property type="taxonomic scope" value="Bacteria"/>
</dbReference>
<dbReference type="HOGENOM" id="CLU_075939_2_1_0"/>
<dbReference type="OrthoDB" id="17764at2"/>
<dbReference type="Proteomes" id="UP000000800">
    <property type="component" value="Chromosome"/>
</dbReference>
<dbReference type="GO" id="GO:0022625">
    <property type="term" value="C:cytosolic large ribosomal subunit"/>
    <property type="evidence" value="ECO:0007669"/>
    <property type="project" value="TreeGrafter"/>
</dbReference>
<dbReference type="GO" id="GO:0008097">
    <property type="term" value="F:5S rRNA binding"/>
    <property type="evidence" value="ECO:0007669"/>
    <property type="project" value="InterPro"/>
</dbReference>
<dbReference type="GO" id="GO:0003735">
    <property type="term" value="F:structural constituent of ribosome"/>
    <property type="evidence" value="ECO:0007669"/>
    <property type="project" value="InterPro"/>
</dbReference>
<dbReference type="GO" id="GO:0006412">
    <property type="term" value="P:translation"/>
    <property type="evidence" value="ECO:0007669"/>
    <property type="project" value="UniProtKB-UniRule"/>
</dbReference>
<dbReference type="CDD" id="cd00495">
    <property type="entry name" value="Ribosomal_L25_TL5_CTC"/>
    <property type="match status" value="1"/>
</dbReference>
<dbReference type="Gene3D" id="2.170.120.20">
    <property type="entry name" value="Ribosomal protein L25, beta domain"/>
    <property type="match status" value="1"/>
</dbReference>
<dbReference type="Gene3D" id="2.40.240.10">
    <property type="entry name" value="Ribosomal Protein L25, Chain P"/>
    <property type="match status" value="1"/>
</dbReference>
<dbReference type="HAMAP" id="MF_01334">
    <property type="entry name" value="Ribosomal_bL25_CTC"/>
    <property type="match status" value="1"/>
</dbReference>
<dbReference type="InterPro" id="IPR020056">
    <property type="entry name" value="Rbsml_bL25/Gln-tRNA_synth_N"/>
</dbReference>
<dbReference type="InterPro" id="IPR011035">
    <property type="entry name" value="Ribosomal_bL25/Gln-tRNA_synth"/>
</dbReference>
<dbReference type="InterPro" id="IPR020057">
    <property type="entry name" value="Ribosomal_bL25_b-dom"/>
</dbReference>
<dbReference type="InterPro" id="IPR037121">
    <property type="entry name" value="Ribosomal_bL25_C"/>
</dbReference>
<dbReference type="InterPro" id="IPR001021">
    <property type="entry name" value="Ribosomal_bL25_long"/>
</dbReference>
<dbReference type="InterPro" id="IPR029751">
    <property type="entry name" value="Ribosomal_L25_dom"/>
</dbReference>
<dbReference type="InterPro" id="IPR020930">
    <property type="entry name" value="Ribosomal_uL5_bac-type"/>
</dbReference>
<dbReference type="NCBIfam" id="TIGR00731">
    <property type="entry name" value="bL25_bact_ctc"/>
    <property type="match status" value="1"/>
</dbReference>
<dbReference type="NCBIfam" id="NF004129">
    <property type="entry name" value="PRK05618.1-4"/>
    <property type="match status" value="1"/>
</dbReference>
<dbReference type="PANTHER" id="PTHR33284">
    <property type="entry name" value="RIBOSOMAL PROTEIN L25/GLN-TRNA SYNTHETASE, ANTI-CODON-BINDING DOMAIN-CONTAINING PROTEIN"/>
    <property type="match status" value="1"/>
</dbReference>
<dbReference type="PANTHER" id="PTHR33284:SF1">
    <property type="entry name" value="RIBOSOMAL PROTEIN L25_GLN-TRNA SYNTHETASE, ANTI-CODON-BINDING DOMAIN-CONTAINING PROTEIN"/>
    <property type="match status" value="1"/>
</dbReference>
<dbReference type="Pfam" id="PF01386">
    <property type="entry name" value="Ribosomal_L25p"/>
    <property type="match status" value="1"/>
</dbReference>
<dbReference type="Pfam" id="PF14693">
    <property type="entry name" value="Ribosomal_TL5_C"/>
    <property type="match status" value="1"/>
</dbReference>
<dbReference type="SUPFAM" id="SSF50715">
    <property type="entry name" value="Ribosomal protein L25-like"/>
    <property type="match status" value="1"/>
</dbReference>